<keyword id="KW-0963">Cytoplasm</keyword>
<keyword id="KW-0489">Methyltransferase</keyword>
<keyword id="KW-1185">Reference proteome</keyword>
<keyword id="KW-0694">RNA-binding</keyword>
<keyword id="KW-0698">rRNA processing</keyword>
<keyword id="KW-0949">S-adenosyl-L-methionine</keyword>
<keyword id="KW-0808">Transferase</keyword>
<gene>
    <name evidence="1" type="primary">rsmA</name>
    <name evidence="1" type="synonym">ksgA</name>
    <name type="ordered locus">CYB_0986</name>
</gene>
<feature type="chain" id="PRO_0000257364" description="Ribosomal RNA small subunit methyltransferase A">
    <location>
        <begin position="1"/>
        <end position="282"/>
    </location>
</feature>
<feature type="binding site" evidence="1">
    <location>
        <position position="11"/>
    </location>
    <ligand>
        <name>S-adenosyl-L-methionine</name>
        <dbReference type="ChEBI" id="CHEBI:59789"/>
    </ligand>
</feature>
<feature type="binding site" evidence="1">
    <location>
        <position position="13"/>
    </location>
    <ligand>
        <name>S-adenosyl-L-methionine</name>
        <dbReference type="ChEBI" id="CHEBI:59789"/>
    </ligand>
</feature>
<feature type="binding site" evidence="1">
    <location>
        <position position="44"/>
    </location>
    <ligand>
        <name>S-adenosyl-L-methionine</name>
        <dbReference type="ChEBI" id="CHEBI:59789"/>
    </ligand>
</feature>
<feature type="binding site" evidence="1">
    <location>
        <position position="65"/>
    </location>
    <ligand>
        <name>S-adenosyl-L-methionine</name>
        <dbReference type="ChEBI" id="CHEBI:59789"/>
    </ligand>
</feature>
<feature type="binding site" evidence="1">
    <location>
        <position position="90"/>
    </location>
    <ligand>
        <name>S-adenosyl-L-methionine</name>
        <dbReference type="ChEBI" id="CHEBI:59789"/>
    </ligand>
</feature>
<feature type="binding site" evidence="1">
    <location>
        <position position="106"/>
    </location>
    <ligand>
        <name>S-adenosyl-L-methionine</name>
        <dbReference type="ChEBI" id="CHEBI:59789"/>
    </ligand>
</feature>
<proteinExistence type="inferred from homology"/>
<evidence type="ECO:0000255" key="1">
    <source>
        <dbReference type="HAMAP-Rule" id="MF_00607"/>
    </source>
</evidence>
<organism>
    <name type="scientific">Synechococcus sp. (strain JA-2-3B'a(2-13))</name>
    <name type="common">Cyanobacteria bacterium Yellowstone B-Prime</name>
    <dbReference type="NCBI Taxonomy" id="321332"/>
    <lineage>
        <taxon>Bacteria</taxon>
        <taxon>Bacillati</taxon>
        <taxon>Cyanobacteriota</taxon>
        <taxon>Cyanophyceae</taxon>
        <taxon>Synechococcales</taxon>
        <taxon>Synechococcaceae</taxon>
        <taxon>Synechococcus</taxon>
    </lineage>
</organism>
<reference key="1">
    <citation type="journal article" date="2007" name="ISME J.">
        <title>Population level functional diversity in a microbial community revealed by comparative genomic and metagenomic analyses.</title>
        <authorList>
            <person name="Bhaya D."/>
            <person name="Grossman A.R."/>
            <person name="Steunou A.-S."/>
            <person name="Khuri N."/>
            <person name="Cohan F.M."/>
            <person name="Hamamura N."/>
            <person name="Melendrez M.C."/>
            <person name="Bateson M.M."/>
            <person name="Ward D.M."/>
            <person name="Heidelberg J.F."/>
        </authorList>
    </citation>
    <scope>NUCLEOTIDE SEQUENCE [LARGE SCALE GENOMIC DNA]</scope>
    <source>
        <strain>JA-2-3B'a(2-13)</strain>
    </source>
</reference>
<accession>Q2JMR8</accession>
<dbReference type="EC" id="2.1.1.182" evidence="1"/>
<dbReference type="EMBL" id="CP000240">
    <property type="protein sequence ID" value="ABD01964.1"/>
    <property type="molecule type" value="Genomic_DNA"/>
</dbReference>
<dbReference type="SMR" id="Q2JMR8"/>
<dbReference type="STRING" id="321332.CYB_0986"/>
<dbReference type="KEGG" id="cyb:CYB_0986"/>
<dbReference type="eggNOG" id="COG0030">
    <property type="taxonomic scope" value="Bacteria"/>
</dbReference>
<dbReference type="HOGENOM" id="CLU_041220_0_1_3"/>
<dbReference type="OrthoDB" id="9814755at2"/>
<dbReference type="Proteomes" id="UP000001938">
    <property type="component" value="Chromosome"/>
</dbReference>
<dbReference type="GO" id="GO:0005829">
    <property type="term" value="C:cytosol"/>
    <property type="evidence" value="ECO:0007669"/>
    <property type="project" value="TreeGrafter"/>
</dbReference>
<dbReference type="GO" id="GO:0052908">
    <property type="term" value="F:16S rRNA (adenine(1518)-N(6)/adenine(1519)-N(6))-dimethyltransferase activity"/>
    <property type="evidence" value="ECO:0007669"/>
    <property type="project" value="UniProtKB-EC"/>
</dbReference>
<dbReference type="GO" id="GO:0003723">
    <property type="term" value="F:RNA binding"/>
    <property type="evidence" value="ECO:0007669"/>
    <property type="project" value="UniProtKB-KW"/>
</dbReference>
<dbReference type="CDD" id="cd02440">
    <property type="entry name" value="AdoMet_MTases"/>
    <property type="match status" value="1"/>
</dbReference>
<dbReference type="Gene3D" id="1.10.8.100">
    <property type="entry name" value="Ribosomal RNA adenine dimethylase-like, domain 2"/>
    <property type="match status" value="1"/>
</dbReference>
<dbReference type="Gene3D" id="3.40.50.150">
    <property type="entry name" value="Vaccinia Virus protein VP39"/>
    <property type="match status" value="1"/>
</dbReference>
<dbReference type="HAMAP" id="MF_00607">
    <property type="entry name" value="16SrRNA_methyltr_A"/>
    <property type="match status" value="1"/>
</dbReference>
<dbReference type="InterPro" id="IPR001737">
    <property type="entry name" value="KsgA/Erm"/>
</dbReference>
<dbReference type="InterPro" id="IPR023165">
    <property type="entry name" value="rRNA_Ade_diMease-like_C"/>
</dbReference>
<dbReference type="InterPro" id="IPR020596">
    <property type="entry name" value="rRNA_Ade_Mease_Trfase_CS"/>
</dbReference>
<dbReference type="InterPro" id="IPR020598">
    <property type="entry name" value="rRNA_Ade_methylase_Trfase_N"/>
</dbReference>
<dbReference type="InterPro" id="IPR011530">
    <property type="entry name" value="rRNA_adenine_dimethylase"/>
</dbReference>
<dbReference type="InterPro" id="IPR029063">
    <property type="entry name" value="SAM-dependent_MTases_sf"/>
</dbReference>
<dbReference type="NCBIfam" id="TIGR00755">
    <property type="entry name" value="ksgA"/>
    <property type="match status" value="1"/>
</dbReference>
<dbReference type="PANTHER" id="PTHR11727">
    <property type="entry name" value="DIMETHYLADENOSINE TRANSFERASE"/>
    <property type="match status" value="1"/>
</dbReference>
<dbReference type="PANTHER" id="PTHR11727:SF7">
    <property type="entry name" value="DIMETHYLADENOSINE TRANSFERASE-RELATED"/>
    <property type="match status" value="1"/>
</dbReference>
<dbReference type="Pfam" id="PF00398">
    <property type="entry name" value="RrnaAD"/>
    <property type="match status" value="1"/>
</dbReference>
<dbReference type="SMART" id="SM00650">
    <property type="entry name" value="rADc"/>
    <property type="match status" value="1"/>
</dbReference>
<dbReference type="SUPFAM" id="SSF53335">
    <property type="entry name" value="S-adenosyl-L-methionine-dependent methyltransferases"/>
    <property type="match status" value="1"/>
</dbReference>
<dbReference type="PROSITE" id="PS01131">
    <property type="entry name" value="RRNA_A_DIMETH"/>
    <property type="match status" value="1"/>
</dbReference>
<dbReference type="PROSITE" id="PS51689">
    <property type="entry name" value="SAM_RNA_A_N6_MT"/>
    <property type="match status" value="1"/>
</dbReference>
<protein>
    <recommendedName>
        <fullName evidence="1">Ribosomal RNA small subunit methyltransferase A</fullName>
        <ecNumber evidence="1">2.1.1.182</ecNumber>
    </recommendedName>
    <alternativeName>
        <fullName evidence="1">16S rRNA (adenine(1518)-N(6)/adenine(1519)-N(6))-dimethyltransferase</fullName>
    </alternativeName>
    <alternativeName>
        <fullName evidence="1">16S rRNA dimethyladenosine transferase</fullName>
    </alternativeName>
    <alternativeName>
        <fullName evidence="1">16S rRNA dimethylase</fullName>
    </alternativeName>
    <alternativeName>
        <fullName evidence="1">S-adenosylmethionine-6-N', N'-adenosyl(rRNA) dimethyltransferase</fullName>
    </alternativeName>
</protein>
<name>RSMA_SYNJB</name>
<comment type="function">
    <text evidence="1">Specifically dimethylates two adjacent adenosines (A1518 and A1519) in the loop of a conserved hairpin near the 3'-end of 16S rRNA in the 30S particle. May play a critical role in biogenesis of 30S subunits.</text>
</comment>
<comment type="catalytic activity">
    <reaction evidence="1">
        <text>adenosine(1518)/adenosine(1519) in 16S rRNA + 4 S-adenosyl-L-methionine = N(6)-dimethyladenosine(1518)/N(6)-dimethyladenosine(1519) in 16S rRNA + 4 S-adenosyl-L-homocysteine + 4 H(+)</text>
        <dbReference type="Rhea" id="RHEA:19609"/>
        <dbReference type="Rhea" id="RHEA-COMP:10232"/>
        <dbReference type="Rhea" id="RHEA-COMP:10233"/>
        <dbReference type="ChEBI" id="CHEBI:15378"/>
        <dbReference type="ChEBI" id="CHEBI:57856"/>
        <dbReference type="ChEBI" id="CHEBI:59789"/>
        <dbReference type="ChEBI" id="CHEBI:74411"/>
        <dbReference type="ChEBI" id="CHEBI:74493"/>
        <dbReference type="EC" id="2.1.1.182"/>
    </reaction>
</comment>
<comment type="subcellular location">
    <subcellularLocation>
        <location evidence="1">Cytoplasm</location>
    </subcellularLocation>
</comment>
<comment type="similarity">
    <text evidence="1">Belongs to the class I-like SAM-binding methyltransferase superfamily. rRNA adenine N(6)-methyltransferase family. RsmA subfamily.</text>
</comment>
<sequence>MPYPRKRFGQHWLKDPAVHEAILRAAQLNDLERGADPTWVLEIGPGTGQLTRRLLAQGVQVVAVEIDRDLCRLLRKRFADQPRFHLVEGDFLRLPLPPQPRLLVANIPYNLTGSILEKVLGSPAQPVRQFERIVLLVQKELAERLQAGPGSKAYGALSLRTQYLADCELICRVPPTAFKPAPKVESAVIRLTPRPAPTPVRDPCWFNHLLRQGFSTRRKKLVNALGSLVEREVVAAALAQLRLNPDARAEELDLPHWLALSDLLLEKAPKRAVVPQEEQEPG</sequence>